<dbReference type="EMBL" id="CP000830">
    <property type="protein sequence ID" value="ABV94761.1"/>
    <property type="molecule type" value="Genomic_DNA"/>
</dbReference>
<dbReference type="RefSeq" id="WP_012179689.1">
    <property type="nucleotide sequence ID" value="NC_009952.1"/>
</dbReference>
<dbReference type="SMR" id="A8LKH8"/>
<dbReference type="STRING" id="398580.Dshi_3028"/>
<dbReference type="KEGG" id="dsh:Dshi_3028"/>
<dbReference type="eggNOG" id="COG0711">
    <property type="taxonomic scope" value="Bacteria"/>
</dbReference>
<dbReference type="HOGENOM" id="CLU_079215_1_0_5"/>
<dbReference type="OrthoDB" id="9805716at2"/>
<dbReference type="Proteomes" id="UP000006833">
    <property type="component" value="Chromosome"/>
</dbReference>
<dbReference type="GO" id="GO:0005886">
    <property type="term" value="C:plasma membrane"/>
    <property type="evidence" value="ECO:0007669"/>
    <property type="project" value="UniProtKB-SubCell"/>
</dbReference>
<dbReference type="GO" id="GO:0045259">
    <property type="term" value="C:proton-transporting ATP synthase complex"/>
    <property type="evidence" value="ECO:0007669"/>
    <property type="project" value="UniProtKB-KW"/>
</dbReference>
<dbReference type="GO" id="GO:0046933">
    <property type="term" value="F:proton-transporting ATP synthase activity, rotational mechanism"/>
    <property type="evidence" value="ECO:0007669"/>
    <property type="project" value="UniProtKB-UniRule"/>
</dbReference>
<dbReference type="GO" id="GO:0046961">
    <property type="term" value="F:proton-transporting ATPase activity, rotational mechanism"/>
    <property type="evidence" value="ECO:0007669"/>
    <property type="project" value="TreeGrafter"/>
</dbReference>
<dbReference type="CDD" id="cd06503">
    <property type="entry name" value="ATP-synt_Fo_b"/>
    <property type="match status" value="1"/>
</dbReference>
<dbReference type="Gene3D" id="6.10.250.1580">
    <property type="match status" value="1"/>
</dbReference>
<dbReference type="HAMAP" id="MF_01398">
    <property type="entry name" value="ATP_synth_b_bprime"/>
    <property type="match status" value="1"/>
</dbReference>
<dbReference type="InterPro" id="IPR002146">
    <property type="entry name" value="ATP_synth_b/b'su_bac/chlpt"/>
</dbReference>
<dbReference type="InterPro" id="IPR050059">
    <property type="entry name" value="ATP_synthase_B_chain"/>
</dbReference>
<dbReference type="NCBIfam" id="NF009988">
    <property type="entry name" value="PRK13454.1"/>
    <property type="match status" value="1"/>
</dbReference>
<dbReference type="PANTHER" id="PTHR33445:SF1">
    <property type="entry name" value="ATP SYNTHASE SUBUNIT B"/>
    <property type="match status" value="1"/>
</dbReference>
<dbReference type="PANTHER" id="PTHR33445">
    <property type="entry name" value="ATP SYNTHASE SUBUNIT B', CHLOROPLASTIC"/>
    <property type="match status" value="1"/>
</dbReference>
<dbReference type="Pfam" id="PF00430">
    <property type="entry name" value="ATP-synt_B"/>
    <property type="match status" value="1"/>
</dbReference>
<feature type="chain" id="PRO_0000369008" description="ATP synthase subunit b 2">
    <location>
        <begin position="1"/>
        <end position="174"/>
    </location>
</feature>
<feature type="transmembrane region" description="Helical" evidence="2">
    <location>
        <begin position="27"/>
        <end position="47"/>
    </location>
</feature>
<sequence length="174" mass="17961">MATEATGAVEAAPGMPQLDFSTFPNQIFWLIITLVAIYLILTKVALPRIGSVLAERSGTITNDLAAAEELKLAAVEAEKAYNQALADARAEAQKIVAEARAEIQADLDVATAKADAEIAAKSAEAEKAIAEIREGAMASVTEVATDTAQALVAALLPSAKDADVSAAVAERVKG</sequence>
<gene>
    <name type="primary">atpF2</name>
    <name type="synonym">atpG</name>
    <name type="ordered locus">Dshi_3028</name>
</gene>
<reference key="1">
    <citation type="journal article" date="2010" name="ISME J.">
        <title>The complete genome sequence of the algal symbiont Dinoroseobacter shibae: a hitchhiker's guide to life in the sea.</title>
        <authorList>
            <person name="Wagner-Dobler I."/>
            <person name="Ballhausen B."/>
            <person name="Berger M."/>
            <person name="Brinkhoff T."/>
            <person name="Buchholz I."/>
            <person name="Bunk B."/>
            <person name="Cypionka H."/>
            <person name="Daniel R."/>
            <person name="Drepper T."/>
            <person name="Gerdts G."/>
            <person name="Hahnke S."/>
            <person name="Han C."/>
            <person name="Jahn D."/>
            <person name="Kalhoefer D."/>
            <person name="Kiss H."/>
            <person name="Klenk H.P."/>
            <person name="Kyrpides N."/>
            <person name="Liebl W."/>
            <person name="Liesegang H."/>
            <person name="Meincke L."/>
            <person name="Pati A."/>
            <person name="Petersen J."/>
            <person name="Piekarski T."/>
            <person name="Pommerenke C."/>
            <person name="Pradella S."/>
            <person name="Pukall R."/>
            <person name="Rabus R."/>
            <person name="Stackebrandt E."/>
            <person name="Thole S."/>
            <person name="Thompson L."/>
            <person name="Tielen P."/>
            <person name="Tomasch J."/>
            <person name="von Jan M."/>
            <person name="Wanphrut N."/>
            <person name="Wichels A."/>
            <person name="Zech H."/>
            <person name="Simon M."/>
        </authorList>
    </citation>
    <scope>NUCLEOTIDE SEQUENCE [LARGE SCALE GENOMIC DNA]</scope>
    <source>
        <strain>DSM 16493 / NCIMB 14021 / DFL 12</strain>
    </source>
</reference>
<accession>A8LKH8</accession>
<proteinExistence type="inferred from homology"/>
<keyword id="KW-0066">ATP synthesis</keyword>
<keyword id="KW-0997">Cell inner membrane</keyword>
<keyword id="KW-1003">Cell membrane</keyword>
<keyword id="KW-0138">CF(0)</keyword>
<keyword id="KW-0375">Hydrogen ion transport</keyword>
<keyword id="KW-0406">Ion transport</keyword>
<keyword id="KW-0472">Membrane</keyword>
<keyword id="KW-1185">Reference proteome</keyword>
<keyword id="KW-0812">Transmembrane</keyword>
<keyword id="KW-1133">Transmembrane helix</keyword>
<keyword id="KW-0813">Transport</keyword>
<comment type="function">
    <text evidence="1">F(1)F(0) ATP synthase produces ATP from ADP in the presence of a proton or sodium gradient. F-type ATPases consist of two structural domains, F(1) containing the extramembraneous catalytic core and F(0) containing the membrane proton channel, linked together by a central stalk and a peripheral stalk. During catalysis, ATP synthesis in the catalytic domain of F(1) is coupled via a rotary mechanism of the central stalk subunits to proton translocation (By similarity).</text>
</comment>
<comment type="function">
    <text evidence="1">Component of the F(0) channel, it forms part of the peripheral stalk, linking F(1) to F(0). The b'-subunit is a diverged and duplicated form of b found in plants and photosynthetic bacteria (By similarity).</text>
</comment>
<comment type="subunit">
    <text evidence="1">F-type ATPases have 2 components, F(1) - the catalytic core - and F(0) - the membrane proton channel. F(1) has five subunits: alpha(3), beta(3), gamma(1), delta(1), epsilon(1). F(0) has three main subunits: a(1), b(2) and c(10-14). The alpha and beta chains form an alternating ring which encloses part of the gamma chain. F(1) is attached to F(0) by a central stalk formed by the gamma and epsilon chains, while a peripheral stalk is formed by the delta and b chains (By similarity).</text>
</comment>
<comment type="subcellular location">
    <subcellularLocation>
        <location evidence="1">Cell inner membrane</location>
        <topology evidence="1">Single-pass membrane protein</topology>
    </subcellularLocation>
</comment>
<comment type="similarity">
    <text evidence="3">Belongs to the ATPase B chain family.</text>
</comment>
<protein>
    <recommendedName>
        <fullName>ATP synthase subunit b 2</fullName>
    </recommendedName>
    <alternativeName>
        <fullName>ATP synthase F(0) sector subunit b 2</fullName>
    </alternativeName>
    <alternativeName>
        <fullName>ATPase subunit I 2</fullName>
    </alternativeName>
    <alternativeName>
        <fullName>F-type ATPase subunit b 2</fullName>
        <shortName>F-ATPase subunit b 2</shortName>
    </alternativeName>
</protein>
<evidence type="ECO:0000250" key="1"/>
<evidence type="ECO:0000255" key="2"/>
<evidence type="ECO:0000305" key="3"/>
<name>ATPF2_DINSH</name>
<organism>
    <name type="scientific">Dinoroseobacter shibae (strain DSM 16493 / NCIMB 14021 / DFL 12)</name>
    <dbReference type="NCBI Taxonomy" id="398580"/>
    <lineage>
        <taxon>Bacteria</taxon>
        <taxon>Pseudomonadati</taxon>
        <taxon>Pseudomonadota</taxon>
        <taxon>Alphaproteobacteria</taxon>
        <taxon>Rhodobacterales</taxon>
        <taxon>Roseobacteraceae</taxon>
        <taxon>Dinoroseobacter</taxon>
    </lineage>
</organism>